<proteinExistence type="inferred from homology"/>
<organism>
    <name type="scientific">Desulforamulus reducens (strain ATCC BAA-1160 / DSM 100696 / MI-1)</name>
    <name type="common">Desulfotomaculum reducens</name>
    <dbReference type="NCBI Taxonomy" id="349161"/>
    <lineage>
        <taxon>Bacteria</taxon>
        <taxon>Bacillati</taxon>
        <taxon>Bacillota</taxon>
        <taxon>Clostridia</taxon>
        <taxon>Eubacteriales</taxon>
        <taxon>Peptococcaceae</taxon>
        <taxon>Desulforamulus</taxon>
    </lineage>
</organism>
<accession>A4J3Q5</accession>
<evidence type="ECO:0000255" key="1">
    <source>
        <dbReference type="HAMAP-Rule" id="MF_01867"/>
    </source>
</evidence>
<keyword id="KW-0175">Coiled coil</keyword>
<keyword id="KW-0436">Ligase</keyword>
<keyword id="KW-1185">Reference proteome</keyword>
<gene>
    <name evidence="1" type="primary">bshC</name>
    <name type="ordered locus">Dred_1174</name>
</gene>
<sequence length="540" mass="62052">MRIEYVDSFYSQPFPGTYMRDFGQVKHFFEYNPHQLQEYKTRCEHELALPKEHLVALAENLKDFNQGLGCGEKTLHNIELLDQGKALTVVTGQQPGILTGPLYTIYKAMGTIGLAEKLSKELNRKVIPVFWIGADDHDHEEINHIFIPTAKGPKRITLAGKPAGRISVGNIPIPDIALLLEELEDLLPPIGWKNQGIELIKRTAHEAANLAEWFGKLMTFLFKDYGLVFINPVLPQVRAITASLFYKVVTTAPAVNQLLQASCQQMLGCGYTPQVQGEKDKLHLFWYNEHGYREALYYKKGLISNKDGTRTWTKGQLGELCLTNPAKFSPDVVMRPVVQEKLLPVLAYVAGPGEISYYALLKRIFHYFAMKMPVIYPRPNITVIEPLIKRLITKYQVPLSCLTYGLEEFIENYLQQEDQLGIETVFNELRGTLKEKQGEVVKKLSILDPDIEGMGKENLKRLIRVVNSFEEKVKQRHRKNNQVAIQQLQKIQHMTQPMGQWQERVYNIFPYVMKYGPGIIKEMYHLIEISDWRQKIIFFD</sequence>
<comment type="function">
    <text evidence="1">Involved in bacillithiol (BSH) biosynthesis. May catalyze the last step of the pathway, the addition of cysteine to glucosamine malate (GlcN-Mal) to generate BSH.</text>
</comment>
<comment type="similarity">
    <text evidence="1">Belongs to the BshC family.</text>
</comment>
<protein>
    <recommendedName>
        <fullName evidence="1">Putative cysteine ligase BshC</fullName>
        <ecNumber evidence="1">6.-.-.-</ecNumber>
    </recommendedName>
</protein>
<dbReference type="EC" id="6.-.-.-" evidence="1"/>
<dbReference type="EMBL" id="CP000612">
    <property type="protein sequence ID" value="ABO49708.1"/>
    <property type="molecule type" value="Genomic_DNA"/>
</dbReference>
<dbReference type="RefSeq" id="WP_011877534.1">
    <property type="nucleotide sequence ID" value="NC_009253.1"/>
</dbReference>
<dbReference type="SMR" id="A4J3Q5"/>
<dbReference type="STRING" id="349161.Dred_1174"/>
<dbReference type="KEGG" id="drm:Dred_1174"/>
<dbReference type="eggNOG" id="COG4365">
    <property type="taxonomic scope" value="Bacteria"/>
</dbReference>
<dbReference type="HOGENOM" id="CLU_022249_1_0_9"/>
<dbReference type="OrthoDB" id="9765151at2"/>
<dbReference type="Proteomes" id="UP000001556">
    <property type="component" value="Chromosome"/>
</dbReference>
<dbReference type="GO" id="GO:0016874">
    <property type="term" value="F:ligase activity"/>
    <property type="evidence" value="ECO:0007669"/>
    <property type="project" value="UniProtKB-UniRule"/>
</dbReference>
<dbReference type="HAMAP" id="MF_01867">
    <property type="entry name" value="BshC"/>
    <property type="match status" value="1"/>
</dbReference>
<dbReference type="InterPro" id="IPR011199">
    <property type="entry name" value="Bacillithiol_biosynth_BshC"/>
</dbReference>
<dbReference type="InterPro" id="IPR055399">
    <property type="entry name" value="CC_BshC"/>
</dbReference>
<dbReference type="InterPro" id="IPR055398">
    <property type="entry name" value="Rossmann-like_BshC"/>
</dbReference>
<dbReference type="NCBIfam" id="TIGR03998">
    <property type="entry name" value="thiol_BshC"/>
    <property type="match status" value="1"/>
</dbReference>
<dbReference type="Pfam" id="PF24850">
    <property type="entry name" value="CC_BshC"/>
    <property type="match status" value="1"/>
</dbReference>
<dbReference type="Pfam" id="PF10079">
    <property type="entry name" value="Rossmann-like_BshC"/>
    <property type="match status" value="1"/>
</dbReference>
<dbReference type="PIRSF" id="PIRSF012535">
    <property type="entry name" value="UCP012535"/>
    <property type="match status" value="1"/>
</dbReference>
<feature type="chain" id="PRO_0000378234" description="Putative cysteine ligase BshC">
    <location>
        <begin position="1"/>
        <end position="540"/>
    </location>
</feature>
<feature type="coiled-coil region" evidence="1">
    <location>
        <begin position="455"/>
        <end position="491"/>
    </location>
</feature>
<reference key="1">
    <citation type="submission" date="2007-03" db="EMBL/GenBank/DDBJ databases">
        <title>Complete sequence of Desulfotomaculum reducens MI-1.</title>
        <authorList>
            <consortium name="US DOE Joint Genome Institute"/>
            <person name="Copeland A."/>
            <person name="Lucas S."/>
            <person name="Lapidus A."/>
            <person name="Barry K."/>
            <person name="Detter J.C."/>
            <person name="Glavina del Rio T."/>
            <person name="Hammon N."/>
            <person name="Israni S."/>
            <person name="Dalin E."/>
            <person name="Tice H."/>
            <person name="Pitluck S."/>
            <person name="Sims D."/>
            <person name="Brettin T."/>
            <person name="Bruce D."/>
            <person name="Han C."/>
            <person name="Tapia R."/>
            <person name="Schmutz J."/>
            <person name="Larimer F."/>
            <person name="Land M."/>
            <person name="Hauser L."/>
            <person name="Kyrpides N."/>
            <person name="Kim E."/>
            <person name="Tebo B.M."/>
            <person name="Richardson P."/>
        </authorList>
    </citation>
    <scope>NUCLEOTIDE SEQUENCE [LARGE SCALE GENOMIC DNA]</scope>
    <source>
        <strain>ATCC BAA-1160 / DSM 100696 / MI-1</strain>
    </source>
</reference>
<name>BSHC_DESRM</name>